<accession>Q2FF35</accession>
<evidence type="ECO:0000255" key="1">
    <source>
        <dbReference type="HAMAP-Rule" id="MF_00097"/>
    </source>
</evidence>
<reference key="1">
    <citation type="journal article" date="2006" name="Lancet">
        <title>Complete genome sequence of USA300, an epidemic clone of community-acquired meticillin-resistant Staphylococcus aureus.</title>
        <authorList>
            <person name="Diep B.A."/>
            <person name="Gill S.R."/>
            <person name="Chang R.F."/>
            <person name="Phan T.H."/>
            <person name="Chen J.H."/>
            <person name="Davidson M.G."/>
            <person name="Lin F."/>
            <person name="Lin J."/>
            <person name="Carleton H.A."/>
            <person name="Mongodin E.F."/>
            <person name="Sensabaugh G.F."/>
            <person name="Perdreau-Remington F."/>
        </authorList>
    </citation>
    <scope>NUCLEOTIDE SEQUENCE [LARGE SCALE GENOMIC DNA]</scope>
    <source>
        <strain>USA300</strain>
    </source>
</reference>
<comment type="function">
    <text evidence="1">Condenses 4-methyl-5-(beta-hydroxyethyl)thiazole monophosphate (THZ-P) and 2-methyl-4-amino-5-hydroxymethyl pyrimidine pyrophosphate (HMP-PP) to form thiamine monophosphate (TMP).</text>
</comment>
<comment type="catalytic activity">
    <reaction evidence="1">
        <text>2-[(2R,5Z)-2-carboxy-4-methylthiazol-5(2H)-ylidene]ethyl phosphate + 4-amino-2-methyl-5-(diphosphooxymethyl)pyrimidine + 2 H(+) = thiamine phosphate + CO2 + diphosphate</text>
        <dbReference type="Rhea" id="RHEA:47844"/>
        <dbReference type="ChEBI" id="CHEBI:15378"/>
        <dbReference type="ChEBI" id="CHEBI:16526"/>
        <dbReference type="ChEBI" id="CHEBI:33019"/>
        <dbReference type="ChEBI" id="CHEBI:37575"/>
        <dbReference type="ChEBI" id="CHEBI:57841"/>
        <dbReference type="ChEBI" id="CHEBI:62899"/>
        <dbReference type="EC" id="2.5.1.3"/>
    </reaction>
</comment>
<comment type="catalytic activity">
    <reaction evidence="1">
        <text>2-(2-carboxy-4-methylthiazol-5-yl)ethyl phosphate + 4-amino-2-methyl-5-(diphosphooxymethyl)pyrimidine + 2 H(+) = thiamine phosphate + CO2 + diphosphate</text>
        <dbReference type="Rhea" id="RHEA:47848"/>
        <dbReference type="ChEBI" id="CHEBI:15378"/>
        <dbReference type="ChEBI" id="CHEBI:16526"/>
        <dbReference type="ChEBI" id="CHEBI:33019"/>
        <dbReference type="ChEBI" id="CHEBI:37575"/>
        <dbReference type="ChEBI" id="CHEBI:57841"/>
        <dbReference type="ChEBI" id="CHEBI:62890"/>
        <dbReference type="EC" id="2.5.1.3"/>
    </reaction>
</comment>
<comment type="catalytic activity">
    <reaction evidence="1">
        <text>4-methyl-5-(2-phosphooxyethyl)-thiazole + 4-amino-2-methyl-5-(diphosphooxymethyl)pyrimidine + H(+) = thiamine phosphate + diphosphate</text>
        <dbReference type="Rhea" id="RHEA:22328"/>
        <dbReference type="ChEBI" id="CHEBI:15378"/>
        <dbReference type="ChEBI" id="CHEBI:33019"/>
        <dbReference type="ChEBI" id="CHEBI:37575"/>
        <dbReference type="ChEBI" id="CHEBI:57841"/>
        <dbReference type="ChEBI" id="CHEBI:58296"/>
        <dbReference type="EC" id="2.5.1.3"/>
    </reaction>
</comment>
<comment type="cofactor">
    <cofactor evidence="1">
        <name>Mg(2+)</name>
        <dbReference type="ChEBI" id="CHEBI:18420"/>
    </cofactor>
    <text evidence="1">Binds 1 Mg(2+) ion per subunit.</text>
</comment>
<comment type="pathway">
    <text evidence="1">Cofactor biosynthesis; thiamine diphosphate biosynthesis; thiamine phosphate from 4-amino-2-methyl-5-diphosphomethylpyrimidine and 4-methyl-5-(2-phosphoethyl)-thiazole: step 1/1.</text>
</comment>
<comment type="similarity">
    <text evidence="1">Belongs to the thiamine-phosphate synthase family.</text>
</comment>
<proteinExistence type="inferred from homology"/>
<sequence>MFNQSYLNVYFICGTSDVPSHRTIHEVLEAALKAGITLFQFREKGESALKGNDKLVLAKELQHLCHQYDVPFIVNDDVSLAKEINADGIHVGQDDAKVKEIAQYFTDKIIGLSISDLDEYAKSDLTHVDYIGVGPIYPTPSKHDAHIPVGPEMIATFKEMNPQLPIVAIGGINTNNVAPIVEAGANGISVISAISKSENIEKTVNRFKDFFNN</sequence>
<protein>
    <recommendedName>
        <fullName evidence="1">Thiamine-phosphate synthase</fullName>
        <shortName evidence="1">TP synthase</shortName>
        <shortName evidence="1">TPS</shortName>
        <ecNumber evidence="1">2.5.1.3</ecNumber>
    </recommendedName>
    <alternativeName>
        <fullName evidence="1">Thiamine-phosphate pyrophosphorylase</fullName>
        <shortName evidence="1">TMP pyrophosphorylase</shortName>
        <shortName evidence="1">TMP-PPase</shortName>
    </alternativeName>
</protein>
<dbReference type="EC" id="2.5.1.3" evidence="1"/>
<dbReference type="EMBL" id="CP000255">
    <property type="protein sequence ID" value="ABD22374.1"/>
    <property type="molecule type" value="Genomic_DNA"/>
</dbReference>
<dbReference type="RefSeq" id="WP_000483153.1">
    <property type="nucleotide sequence ID" value="NZ_CP027476.1"/>
</dbReference>
<dbReference type="SMR" id="Q2FF35"/>
<dbReference type="KEGG" id="saa:SAUSA300_2047"/>
<dbReference type="HOGENOM" id="CLU_018272_3_2_9"/>
<dbReference type="UniPathway" id="UPA00060">
    <property type="reaction ID" value="UER00141"/>
</dbReference>
<dbReference type="Proteomes" id="UP000001939">
    <property type="component" value="Chromosome"/>
</dbReference>
<dbReference type="GO" id="GO:0005737">
    <property type="term" value="C:cytoplasm"/>
    <property type="evidence" value="ECO:0007669"/>
    <property type="project" value="TreeGrafter"/>
</dbReference>
<dbReference type="GO" id="GO:0000287">
    <property type="term" value="F:magnesium ion binding"/>
    <property type="evidence" value="ECO:0007669"/>
    <property type="project" value="UniProtKB-UniRule"/>
</dbReference>
<dbReference type="GO" id="GO:0004789">
    <property type="term" value="F:thiamine-phosphate diphosphorylase activity"/>
    <property type="evidence" value="ECO:0007669"/>
    <property type="project" value="UniProtKB-UniRule"/>
</dbReference>
<dbReference type="GO" id="GO:0009228">
    <property type="term" value="P:thiamine biosynthetic process"/>
    <property type="evidence" value="ECO:0007669"/>
    <property type="project" value="UniProtKB-KW"/>
</dbReference>
<dbReference type="GO" id="GO:0009229">
    <property type="term" value="P:thiamine diphosphate biosynthetic process"/>
    <property type="evidence" value="ECO:0007669"/>
    <property type="project" value="UniProtKB-UniRule"/>
</dbReference>
<dbReference type="CDD" id="cd00564">
    <property type="entry name" value="TMP_TenI"/>
    <property type="match status" value="1"/>
</dbReference>
<dbReference type="FunFam" id="3.20.20.70:FF:000096">
    <property type="entry name" value="Thiamine-phosphate synthase"/>
    <property type="match status" value="1"/>
</dbReference>
<dbReference type="Gene3D" id="3.20.20.70">
    <property type="entry name" value="Aldolase class I"/>
    <property type="match status" value="1"/>
</dbReference>
<dbReference type="HAMAP" id="MF_00097">
    <property type="entry name" value="TMP_synthase"/>
    <property type="match status" value="1"/>
</dbReference>
<dbReference type="InterPro" id="IPR013785">
    <property type="entry name" value="Aldolase_TIM"/>
</dbReference>
<dbReference type="InterPro" id="IPR036206">
    <property type="entry name" value="ThiamineP_synth_sf"/>
</dbReference>
<dbReference type="InterPro" id="IPR022998">
    <property type="entry name" value="ThiamineP_synth_TenI"/>
</dbReference>
<dbReference type="InterPro" id="IPR034291">
    <property type="entry name" value="TMP_synthase"/>
</dbReference>
<dbReference type="NCBIfam" id="TIGR00693">
    <property type="entry name" value="thiE"/>
    <property type="match status" value="1"/>
</dbReference>
<dbReference type="PANTHER" id="PTHR20857">
    <property type="entry name" value="THIAMINE-PHOSPHATE PYROPHOSPHORYLASE"/>
    <property type="match status" value="1"/>
</dbReference>
<dbReference type="PANTHER" id="PTHR20857:SF15">
    <property type="entry name" value="THIAMINE-PHOSPHATE SYNTHASE"/>
    <property type="match status" value="1"/>
</dbReference>
<dbReference type="Pfam" id="PF02581">
    <property type="entry name" value="TMP-TENI"/>
    <property type="match status" value="1"/>
</dbReference>
<dbReference type="SUPFAM" id="SSF51391">
    <property type="entry name" value="Thiamin phosphate synthase"/>
    <property type="match status" value="1"/>
</dbReference>
<organism>
    <name type="scientific">Staphylococcus aureus (strain USA300)</name>
    <dbReference type="NCBI Taxonomy" id="367830"/>
    <lineage>
        <taxon>Bacteria</taxon>
        <taxon>Bacillati</taxon>
        <taxon>Bacillota</taxon>
        <taxon>Bacilli</taxon>
        <taxon>Bacillales</taxon>
        <taxon>Staphylococcaceae</taxon>
        <taxon>Staphylococcus</taxon>
    </lineage>
</organism>
<gene>
    <name evidence="1" type="primary">thiE</name>
    <name type="ordered locus">SAUSA300_2047</name>
</gene>
<keyword id="KW-0460">Magnesium</keyword>
<keyword id="KW-0479">Metal-binding</keyword>
<keyword id="KW-0784">Thiamine biosynthesis</keyword>
<keyword id="KW-0808">Transferase</keyword>
<feature type="chain" id="PRO_1000008175" description="Thiamine-phosphate synthase">
    <location>
        <begin position="1"/>
        <end position="213"/>
    </location>
</feature>
<feature type="binding site" evidence="1">
    <location>
        <begin position="40"/>
        <end position="44"/>
    </location>
    <ligand>
        <name>4-amino-2-methyl-5-(diphosphooxymethyl)pyrimidine</name>
        <dbReference type="ChEBI" id="CHEBI:57841"/>
    </ligand>
</feature>
<feature type="binding site" evidence="1">
    <location>
        <position position="75"/>
    </location>
    <ligand>
        <name>4-amino-2-methyl-5-(diphosphooxymethyl)pyrimidine</name>
        <dbReference type="ChEBI" id="CHEBI:57841"/>
    </ligand>
</feature>
<feature type="binding site" evidence="1">
    <location>
        <position position="76"/>
    </location>
    <ligand>
        <name>Mg(2+)</name>
        <dbReference type="ChEBI" id="CHEBI:18420"/>
    </ligand>
</feature>
<feature type="binding site" evidence="1">
    <location>
        <position position="95"/>
    </location>
    <ligand>
        <name>Mg(2+)</name>
        <dbReference type="ChEBI" id="CHEBI:18420"/>
    </ligand>
</feature>
<feature type="binding site" evidence="1">
    <location>
        <position position="113"/>
    </location>
    <ligand>
        <name>4-amino-2-methyl-5-(diphosphooxymethyl)pyrimidine</name>
        <dbReference type="ChEBI" id="CHEBI:57841"/>
    </ligand>
</feature>
<feature type="binding site" evidence="1">
    <location>
        <begin position="139"/>
        <end position="141"/>
    </location>
    <ligand>
        <name>2-[(2R,5Z)-2-carboxy-4-methylthiazol-5(2H)-ylidene]ethyl phosphate</name>
        <dbReference type="ChEBI" id="CHEBI:62899"/>
    </ligand>
</feature>
<feature type="binding site" evidence="1">
    <location>
        <position position="142"/>
    </location>
    <ligand>
        <name>4-amino-2-methyl-5-(diphosphooxymethyl)pyrimidine</name>
        <dbReference type="ChEBI" id="CHEBI:57841"/>
    </ligand>
</feature>
<feature type="binding site" evidence="1">
    <location>
        <position position="171"/>
    </location>
    <ligand>
        <name>2-[(2R,5Z)-2-carboxy-4-methylthiazol-5(2H)-ylidene]ethyl phosphate</name>
        <dbReference type="ChEBI" id="CHEBI:62899"/>
    </ligand>
</feature>
<feature type="binding site" evidence="1">
    <location>
        <begin position="191"/>
        <end position="192"/>
    </location>
    <ligand>
        <name>2-[(2R,5Z)-2-carboxy-4-methylthiazol-5(2H)-ylidene]ethyl phosphate</name>
        <dbReference type="ChEBI" id="CHEBI:62899"/>
    </ligand>
</feature>
<name>THIE_STAA3</name>